<evidence type="ECO:0000255" key="1">
    <source>
        <dbReference type="HAMAP-Rule" id="MF_00758"/>
    </source>
</evidence>
<comment type="similarity">
    <text evidence="1">Belongs to the UPF0301 (AlgH) family.</text>
</comment>
<feature type="chain" id="PRO_1000046648" description="UPF0301 protein BURPS1106A_3148">
    <location>
        <begin position="1"/>
        <end position="192"/>
    </location>
</feature>
<dbReference type="EMBL" id="CP000572">
    <property type="protein sequence ID" value="ABN91059.1"/>
    <property type="molecule type" value="Genomic_DNA"/>
</dbReference>
<dbReference type="RefSeq" id="WP_004185441.1">
    <property type="nucleotide sequence ID" value="NC_009076.1"/>
</dbReference>
<dbReference type="SMR" id="A3NYG5"/>
<dbReference type="KEGG" id="bpl:BURPS1106A_3148"/>
<dbReference type="HOGENOM" id="CLU_057596_1_0_4"/>
<dbReference type="Proteomes" id="UP000006738">
    <property type="component" value="Chromosome I"/>
</dbReference>
<dbReference type="GO" id="GO:0005829">
    <property type="term" value="C:cytosol"/>
    <property type="evidence" value="ECO:0007669"/>
    <property type="project" value="TreeGrafter"/>
</dbReference>
<dbReference type="Gene3D" id="3.40.1740.10">
    <property type="entry name" value="VC0467-like"/>
    <property type="match status" value="1"/>
</dbReference>
<dbReference type="HAMAP" id="MF_00758">
    <property type="entry name" value="UPF0301"/>
    <property type="match status" value="1"/>
</dbReference>
<dbReference type="InterPro" id="IPR003774">
    <property type="entry name" value="AlgH-like"/>
</dbReference>
<dbReference type="NCBIfam" id="NF001266">
    <property type="entry name" value="PRK00228.1-1"/>
    <property type="match status" value="1"/>
</dbReference>
<dbReference type="NCBIfam" id="NF001267">
    <property type="entry name" value="PRK00228.1-2"/>
    <property type="match status" value="1"/>
</dbReference>
<dbReference type="PANTHER" id="PTHR30327">
    <property type="entry name" value="UNCHARACTERIZED PROTEIN YQGE"/>
    <property type="match status" value="1"/>
</dbReference>
<dbReference type="PANTHER" id="PTHR30327:SF1">
    <property type="entry name" value="UPF0301 PROTEIN YQGE"/>
    <property type="match status" value="1"/>
</dbReference>
<dbReference type="Pfam" id="PF02622">
    <property type="entry name" value="DUF179"/>
    <property type="match status" value="1"/>
</dbReference>
<dbReference type="SUPFAM" id="SSF143456">
    <property type="entry name" value="VC0467-like"/>
    <property type="match status" value="1"/>
</dbReference>
<gene>
    <name type="ordered locus">BURPS1106A_3148</name>
</gene>
<proteinExistence type="inferred from homology"/>
<organism>
    <name type="scientific">Burkholderia pseudomallei (strain 1106a)</name>
    <dbReference type="NCBI Taxonomy" id="357348"/>
    <lineage>
        <taxon>Bacteria</taxon>
        <taxon>Pseudomonadati</taxon>
        <taxon>Pseudomonadota</taxon>
        <taxon>Betaproteobacteria</taxon>
        <taxon>Burkholderiales</taxon>
        <taxon>Burkholderiaceae</taxon>
        <taxon>Burkholderia</taxon>
        <taxon>pseudomallei group</taxon>
    </lineage>
</organism>
<protein>
    <recommendedName>
        <fullName evidence="1">UPF0301 protein BURPS1106A_3148</fullName>
    </recommendedName>
</protein>
<reference key="1">
    <citation type="journal article" date="2010" name="Genome Biol. Evol.">
        <title>Continuing evolution of Burkholderia mallei through genome reduction and large-scale rearrangements.</title>
        <authorList>
            <person name="Losada L."/>
            <person name="Ronning C.M."/>
            <person name="DeShazer D."/>
            <person name="Woods D."/>
            <person name="Fedorova N."/>
            <person name="Kim H.S."/>
            <person name="Shabalina S.A."/>
            <person name="Pearson T.R."/>
            <person name="Brinkac L."/>
            <person name="Tan P."/>
            <person name="Nandi T."/>
            <person name="Crabtree J."/>
            <person name="Badger J."/>
            <person name="Beckstrom-Sternberg S."/>
            <person name="Saqib M."/>
            <person name="Schutzer S.E."/>
            <person name="Keim P."/>
            <person name="Nierman W.C."/>
        </authorList>
    </citation>
    <scope>NUCLEOTIDE SEQUENCE [LARGE SCALE GENOMIC DNA]</scope>
    <source>
        <strain>1106a</strain>
    </source>
</reference>
<name>Y3148_BURP0</name>
<sequence length="192" mass="20646">MSKSSDRINLTNQFLIAMPNMADPTFSGTVVYLCDHSERGALGLVINRPTDIDLESLFNRIDLKLEIEPLLHIPVYFGGPVQTERGFVLHEPVEGSAYNSSMTVEGGLEMTTSKDVLEAVATGTGPKRFLLTLGHAGWGAGQLEEEISKNGWLTVAADPRIVFDTPAEERFEAALGLLGVSSSMLSGEAGHA</sequence>
<accession>A3NYG5</accession>